<sequence length="163" mass="18877">MQTAYFSGGCFWCVEAIFQRIVGIIKLTSGYCNGNTSNPTYQDICLGVTGHAEVVKIEFDEFKISFKVLLDIFFEIHNPTTLNQQGNDRGTQYRSAIFYINNKQQLQAINMINLMSDNIVTQVTKLDCFYPAEDYHQNYFNNNLSKPYCQMLIRPKLDKYFSQ</sequence>
<proteinExistence type="inferred from homology"/>
<name>MSRA_VESOH</name>
<comment type="function">
    <text evidence="1">Has an important function as a repair enzyme for proteins that have been inactivated by oxidation. Catalyzes the reversible oxidation-reduction of methionine sulfoxide in proteins to methionine.</text>
</comment>
<comment type="catalytic activity">
    <reaction evidence="1">
        <text>L-methionyl-[protein] + [thioredoxin]-disulfide + H2O = L-methionyl-(S)-S-oxide-[protein] + [thioredoxin]-dithiol</text>
        <dbReference type="Rhea" id="RHEA:14217"/>
        <dbReference type="Rhea" id="RHEA-COMP:10698"/>
        <dbReference type="Rhea" id="RHEA-COMP:10700"/>
        <dbReference type="Rhea" id="RHEA-COMP:12313"/>
        <dbReference type="Rhea" id="RHEA-COMP:12315"/>
        <dbReference type="ChEBI" id="CHEBI:15377"/>
        <dbReference type="ChEBI" id="CHEBI:16044"/>
        <dbReference type="ChEBI" id="CHEBI:29950"/>
        <dbReference type="ChEBI" id="CHEBI:44120"/>
        <dbReference type="ChEBI" id="CHEBI:50058"/>
        <dbReference type="EC" id="1.8.4.11"/>
    </reaction>
</comment>
<comment type="catalytic activity">
    <reaction evidence="1">
        <text>[thioredoxin]-disulfide + L-methionine + H2O = L-methionine (S)-S-oxide + [thioredoxin]-dithiol</text>
        <dbReference type="Rhea" id="RHEA:19993"/>
        <dbReference type="Rhea" id="RHEA-COMP:10698"/>
        <dbReference type="Rhea" id="RHEA-COMP:10700"/>
        <dbReference type="ChEBI" id="CHEBI:15377"/>
        <dbReference type="ChEBI" id="CHEBI:29950"/>
        <dbReference type="ChEBI" id="CHEBI:50058"/>
        <dbReference type="ChEBI" id="CHEBI:57844"/>
        <dbReference type="ChEBI" id="CHEBI:58772"/>
        <dbReference type="EC" id="1.8.4.11"/>
    </reaction>
</comment>
<comment type="similarity">
    <text evidence="1">Belongs to the MsrA Met sulfoxide reductase family.</text>
</comment>
<evidence type="ECO:0000255" key="1">
    <source>
        <dbReference type="HAMAP-Rule" id="MF_01401"/>
    </source>
</evidence>
<organism>
    <name type="scientific">Vesicomyosocius okutanii subsp. Calyptogena okutanii (strain HA)</name>
    <dbReference type="NCBI Taxonomy" id="412965"/>
    <lineage>
        <taxon>Bacteria</taxon>
        <taxon>Pseudomonadati</taxon>
        <taxon>Pseudomonadota</taxon>
        <taxon>Gammaproteobacteria</taxon>
        <taxon>Candidatus Pseudothioglobaceae</taxon>
        <taxon>Candidatus Vesicomyosocius</taxon>
    </lineage>
</organism>
<feature type="chain" id="PRO_1000073503" description="Peptide methionine sulfoxide reductase MsrA">
    <location>
        <begin position="1"/>
        <end position="163"/>
    </location>
</feature>
<feature type="active site" evidence="1">
    <location>
        <position position="10"/>
    </location>
</feature>
<gene>
    <name evidence="1" type="primary">msrA</name>
    <name type="ordered locus">COSY_0587</name>
</gene>
<reference key="1">
    <citation type="journal article" date="2007" name="Curr. Biol.">
        <title>Reduced genome of the thioautotrophic intracellular symbiont in a deep-sea clam, Calyptogena okutanii.</title>
        <authorList>
            <person name="Kuwahara H."/>
            <person name="Yoshida T."/>
            <person name="Takaki Y."/>
            <person name="Shimamura S."/>
            <person name="Nishi S."/>
            <person name="Harada M."/>
            <person name="Matsuyama K."/>
            <person name="Takishita K."/>
            <person name="Kawato M."/>
            <person name="Uematsu K."/>
            <person name="Fujiwara Y."/>
            <person name="Sato T."/>
            <person name="Kato C."/>
            <person name="Kitagawa M."/>
            <person name="Kato I."/>
            <person name="Maruyama T."/>
        </authorList>
    </citation>
    <scope>NUCLEOTIDE SEQUENCE [LARGE SCALE GENOMIC DNA]</scope>
    <source>
        <strain>HA</strain>
    </source>
</reference>
<dbReference type="EC" id="1.8.4.11" evidence="1"/>
<dbReference type="EMBL" id="AP009247">
    <property type="protein sequence ID" value="BAF61702.1"/>
    <property type="molecule type" value="Genomic_DNA"/>
</dbReference>
<dbReference type="RefSeq" id="WP_011929972.1">
    <property type="nucleotide sequence ID" value="NC_009465.1"/>
</dbReference>
<dbReference type="SMR" id="A5CWI5"/>
<dbReference type="STRING" id="412965.COSY_0587"/>
<dbReference type="KEGG" id="vok:COSY_0587"/>
<dbReference type="eggNOG" id="COG0225">
    <property type="taxonomic scope" value="Bacteria"/>
</dbReference>
<dbReference type="HOGENOM" id="CLU_031040_10_0_6"/>
<dbReference type="OrthoDB" id="4174719at2"/>
<dbReference type="Proteomes" id="UP000000247">
    <property type="component" value="Chromosome"/>
</dbReference>
<dbReference type="GO" id="GO:0033744">
    <property type="term" value="F:L-methionine:thioredoxin-disulfide S-oxidoreductase activity"/>
    <property type="evidence" value="ECO:0007669"/>
    <property type="project" value="RHEA"/>
</dbReference>
<dbReference type="GO" id="GO:0008113">
    <property type="term" value="F:peptide-methionine (S)-S-oxide reductase activity"/>
    <property type="evidence" value="ECO:0007669"/>
    <property type="project" value="UniProtKB-UniRule"/>
</dbReference>
<dbReference type="GO" id="GO:0036211">
    <property type="term" value="P:protein modification process"/>
    <property type="evidence" value="ECO:0007669"/>
    <property type="project" value="UniProtKB-UniRule"/>
</dbReference>
<dbReference type="Gene3D" id="3.30.1060.10">
    <property type="entry name" value="Peptide methionine sulphoxide reductase MsrA"/>
    <property type="match status" value="1"/>
</dbReference>
<dbReference type="HAMAP" id="MF_01401">
    <property type="entry name" value="MsrA"/>
    <property type="match status" value="1"/>
</dbReference>
<dbReference type="InterPro" id="IPR002569">
    <property type="entry name" value="Met_Sox_Rdtase_MsrA_dom"/>
</dbReference>
<dbReference type="InterPro" id="IPR036509">
    <property type="entry name" value="Met_Sox_Rdtase_MsrA_sf"/>
</dbReference>
<dbReference type="NCBIfam" id="TIGR00401">
    <property type="entry name" value="msrA"/>
    <property type="match status" value="1"/>
</dbReference>
<dbReference type="PANTHER" id="PTHR43774">
    <property type="entry name" value="PEPTIDE METHIONINE SULFOXIDE REDUCTASE"/>
    <property type="match status" value="1"/>
</dbReference>
<dbReference type="PANTHER" id="PTHR43774:SF1">
    <property type="entry name" value="PEPTIDE METHIONINE SULFOXIDE REDUCTASE MSRA 2"/>
    <property type="match status" value="1"/>
</dbReference>
<dbReference type="Pfam" id="PF01625">
    <property type="entry name" value="PMSR"/>
    <property type="match status" value="1"/>
</dbReference>
<dbReference type="SUPFAM" id="SSF55068">
    <property type="entry name" value="Peptide methionine sulfoxide reductase"/>
    <property type="match status" value="1"/>
</dbReference>
<accession>A5CWI5</accession>
<protein>
    <recommendedName>
        <fullName evidence="1">Peptide methionine sulfoxide reductase MsrA</fullName>
        <shortName evidence="1">Protein-methionine-S-oxide reductase</shortName>
        <ecNumber evidence="1">1.8.4.11</ecNumber>
    </recommendedName>
    <alternativeName>
        <fullName evidence="1">Peptide-methionine (S)-S-oxide reductase</fullName>
        <shortName evidence="1">Peptide Met(O) reductase</shortName>
    </alternativeName>
</protein>
<keyword id="KW-0560">Oxidoreductase</keyword>
<keyword id="KW-1185">Reference proteome</keyword>